<reference key="1">
    <citation type="journal article" date="1997" name="Microbiology">
        <title>The Bacillus subtilis 168 chromosome from sspE to katA.</title>
        <authorList>
            <person name="Cummings N.J."/>
            <person name="Connerton I.F."/>
        </authorList>
    </citation>
    <scope>NUCLEOTIDE SEQUENCE [GENOMIC DNA]</scope>
    <source>
        <strain>168</strain>
    </source>
</reference>
<reference key="2">
    <citation type="journal article" date="1997" name="Nature">
        <title>The complete genome sequence of the Gram-positive bacterium Bacillus subtilis.</title>
        <authorList>
            <person name="Kunst F."/>
            <person name="Ogasawara N."/>
            <person name="Moszer I."/>
            <person name="Albertini A.M."/>
            <person name="Alloni G."/>
            <person name="Azevedo V."/>
            <person name="Bertero M.G."/>
            <person name="Bessieres P."/>
            <person name="Bolotin A."/>
            <person name="Borchert S."/>
            <person name="Borriss R."/>
            <person name="Boursier L."/>
            <person name="Brans A."/>
            <person name="Braun M."/>
            <person name="Brignell S.C."/>
            <person name="Bron S."/>
            <person name="Brouillet S."/>
            <person name="Bruschi C.V."/>
            <person name="Caldwell B."/>
            <person name="Capuano V."/>
            <person name="Carter N.M."/>
            <person name="Choi S.-K."/>
            <person name="Codani J.-J."/>
            <person name="Connerton I.F."/>
            <person name="Cummings N.J."/>
            <person name="Daniel R.A."/>
            <person name="Denizot F."/>
            <person name="Devine K.M."/>
            <person name="Duesterhoeft A."/>
            <person name="Ehrlich S.D."/>
            <person name="Emmerson P.T."/>
            <person name="Entian K.-D."/>
            <person name="Errington J."/>
            <person name="Fabret C."/>
            <person name="Ferrari E."/>
            <person name="Foulger D."/>
            <person name="Fritz C."/>
            <person name="Fujita M."/>
            <person name="Fujita Y."/>
            <person name="Fuma S."/>
            <person name="Galizzi A."/>
            <person name="Galleron N."/>
            <person name="Ghim S.-Y."/>
            <person name="Glaser P."/>
            <person name="Goffeau A."/>
            <person name="Golightly E.J."/>
            <person name="Grandi G."/>
            <person name="Guiseppi G."/>
            <person name="Guy B.J."/>
            <person name="Haga K."/>
            <person name="Haiech J."/>
            <person name="Harwood C.R."/>
            <person name="Henaut A."/>
            <person name="Hilbert H."/>
            <person name="Holsappel S."/>
            <person name="Hosono S."/>
            <person name="Hullo M.-F."/>
            <person name="Itaya M."/>
            <person name="Jones L.-M."/>
            <person name="Joris B."/>
            <person name="Karamata D."/>
            <person name="Kasahara Y."/>
            <person name="Klaerr-Blanchard M."/>
            <person name="Klein C."/>
            <person name="Kobayashi Y."/>
            <person name="Koetter P."/>
            <person name="Koningstein G."/>
            <person name="Krogh S."/>
            <person name="Kumano M."/>
            <person name="Kurita K."/>
            <person name="Lapidus A."/>
            <person name="Lardinois S."/>
            <person name="Lauber J."/>
            <person name="Lazarevic V."/>
            <person name="Lee S.-M."/>
            <person name="Levine A."/>
            <person name="Liu H."/>
            <person name="Masuda S."/>
            <person name="Mauel C."/>
            <person name="Medigue C."/>
            <person name="Medina N."/>
            <person name="Mellado R.P."/>
            <person name="Mizuno M."/>
            <person name="Moestl D."/>
            <person name="Nakai S."/>
            <person name="Noback M."/>
            <person name="Noone D."/>
            <person name="O'Reilly M."/>
            <person name="Ogawa K."/>
            <person name="Ogiwara A."/>
            <person name="Oudega B."/>
            <person name="Park S.-H."/>
            <person name="Parro V."/>
            <person name="Pohl T.M."/>
            <person name="Portetelle D."/>
            <person name="Porwollik S."/>
            <person name="Prescott A.M."/>
            <person name="Presecan E."/>
            <person name="Pujic P."/>
            <person name="Purnelle B."/>
            <person name="Rapoport G."/>
            <person name="Rey M."/>
            <person name="Reynolds S."/>
            <person name="Rieger M."/>
            <person name="Rivolta C."/>
            <person name="Rocha E."/>
            <person name="Roche B."/>
            <person name="Rose M."/>
            <person name="Sadaie Y."/>
            <person name="Sato T."/>
            <person name="Scanlan E."/>
            <person name="Schleich S."/>
            <person name="Schroeter R."/>
            <person name="Scoffone F."/>
            <person name="Sekiguchi J."/>
            <person name="Sekowska A."/>
            <person name="Seror S.J."/>
            <person name="Serror P."/>
            <person name="Shin B.-S."/>
            <person name="Soldo B."/>
            <person name="Sorokin A."/>
            <person name="Tacconi E."/>
            <person name="Takagi T."/>
            <person name="Takahashi H."/>
            <person name="Takemaru K."/>
            <person name="Takeuchi M."/>
            <person name="Tamakoshi A."/>
            <person name="Tanaka T."/>
            <person name="Terpstra P."/>
            <person name="Tognoni A."/>
            <person name="Tosato V."/>
            <person name="Uchiyama S."/>
            <person name="Vandenbol M."/>
            <person name="Vannier F."/>
            <person name="Vassarotti A."/>
            <person name="Viari A."/>
            <person name="Wambutt R."/>
            <person name="Wedler E."/>
            <person name="Wedler H."/>
            <person name="Weitzenegger T."/>
            <person name="Winters P."/>
            <person name="Wipat A."/>
            <person name="Yamamoto H."/>
            <person name="Yamane K."/>
            <person name="Yasumoto K."/>
            <person name="Yata K."/>
            <person name="Yoshida K."/>
            <person name="Yoshikawa H.-F."/>
            <person name="Zumstein E."/>
            <person name="Yoshikawa H."/>
            <person name="Danchin A."/>
        </authorList>
    </citation>
    <scope>NUCLEOTIDE SEQUENCE [LARGE SCALE GENOMIC DNA]</scope>
    <source>
        <strain>168</strain>
    </source>
</reference>
<reference key="3">
    <citation type="journal article" date="2009" name="Microbiology">
        <title>From a consortium sequence to a unified sequence: the Bacillus subtilis 168 reference genome a decade later.</title>
        <authorList>
            <person name="Barbe V."/>
            <person name="Cruveiller S."/>
            <person name="Kunst F."/>
            <person name="Lenoble P."/>
            <person name="Meurice G."/>
            <person name="Sekowska A."/>
            <person name="Vallenet D."/>
            <person name="Wang T."/>
            <person name="Moszer I."/>
            <person name="Medigue C."/>
            <person name="Danchin A."/>
        </authorList>
    </citation>
    <scope>SEQUENCE REVISION TO 230</scope>
</reference>
<proteinExistence type="inferred from homology"/>
<dbReference type="EC" id="1.-.-.-"/>
<dbReference type="EMBL" id="Z82044">
    <property type="protein sequence ID" value="CAB04812.1"/>
    <property type="status" value="ALT_INIT"/>
    <property type="molecule type" value="Genomic_DNA"/>
</dbReference>
<dbReference type="EMBL" id="AL009126">
    <property type="protein sequence ID" value="CAB12708.2"/>
    <property type="molecule type" value="Genomic_DNA"/>
</dbReference>
<dbReference type="RefSeq" id="NP_388760.2">
    <property type="nucleotide sequence ID" value="NC_000964.3"/>
</dbReference>
<dbReference type="RefSeq" id="WP_003233470.1">
    <property type="nucleotide sequence ID" value="NZ_OZ025638.1"/>
</dbReference>
<dbReference type="SMR" id="Q796Y5"/>
<dbReference type="FunCoup" id="Q796Y5">
    <property type="interactions" value="175"/>
</dbReference>
<dbReference type="STRING" id="224308.BSU08800"/>
<dbReference type="PaxDb" id="224308-BSU08800"/>
<dbReference type="EnsemblBacteria" id="CAB12708">
    <property type="protein sequence ID" value="CAB12708"/>
    <property type="gene ID" value="BSU_08800"/>
</dbReference>
<dbReference type="GeneID" id="939245"/>
<dbReference type="KEGG" id="bsu:BSU08800"/>
<dbReference type="PATRIC" id="fig|224308.179.peg.950"/>
<dbReference type="eggNOG" id="COG0277">
    <property type="taxonomic scope" value="Bacteria"/>
</dbReference>
<dbReference type="InParanoid" id="Q796Y5"/>
<dbReference type="OrthoDB" id="545125at2"/>
<dbReference type="PhylomeDB" id="Q796Y5"/>
<dbReference type="BioCyc" id="BSUB:BSU08800-MONOMER"/>
<dbReference type="Proteomes" id="UP000001570">
    <property type="component" value="Chromosome"/>
</dbReference>
<dbReference type="GO" id="GO:0071949">
    <property type="term" value="F:FAD binding"/>
    <property type="evidence" value="ECO:0007669"/>
    <property type="project" value="InterPro"/>
</dbReference>
<dbReference type="GO" id="GO:0016491">
    <property type="term" value="F:oxidoreductase activity"/>
    <property type="evidence" value="ECO:0007669"/>
    <property type="project" value="UniProtKB-KW"/>
</dbReference>
<dbReference type="Gene3D" id="3.30.465.10">
    <property type="match status" value="1"/>
</dbReference>
<dbReference type="Gene3D" id="3.40.462.20">
    <property type="match status" value="1"/>
</dbReference>
<dbReference type="Gene3D" id="3.30.43.10">
    <property type="entry name" value="Uridine Diphospho-n-acetylenolpyruvylglucosamine Reductase, domain 2"/>
    <property type="match status" value="1"/>
</dbReference>
<dbReference type="InterPro" id="IPR012951">
    <property type="entry name" value="BBE"/>
</dbReference>
<dbReference type="InterPro" id="IPR016166">
    <property type="entry name" value="FAD-bd_PCMH"/>
</dbReference>
<dbReference type="InterPro" id="IPR036318">
    <property type="entry name" value="FAD-bd_PCMH-like_sf"/>
</dbReference>
<dbReference type="InterPro" id="IPR016167">
    <property type="entry name" value="FAD-bd_PCMH_sub1"/>
</dbReference>
<dbReference type="InterPro" id="IPR016169">
    <property type="entry name" value="FAD-bd_PCMH_sub2"/>
</dbReference>
<dbReference type="InterPro" id="IPR050416">
    <property type="entry name" value="FAD-linked_Oxidoreductase"/>
</dbReference>
<dbReference type="InterPro" id="IPR006094">
    <property type="entry name" value="Oxid_FAD_bind_N"/>
</dbReference>
<dbReference type="PANTHER" id="PTHR42973">
    <property type="entry name" value="BINDING OXIDOREDUCTASE, PUTATIVE (AFU_ORTHOLOGUE AFUA_1G17690)-RELATED"/>
    <property type="match status" value="1"/>
</dbReference>
<dbReference type="PANTHER" id="PTHR42973:SF39">
    <property type="entry name" value="FAD-BINDING PCMH-TYPE DOMAIN-CONTAINING PROTEIN"/>
    <property type="match status" value="1"/>
</dbReference>
<dbReference type="Pfam" id="PF08031">
    <property type="entry name" value="BBE"/>
    <property type="match status" value="1"/>
</dbReference>
<dbReference type="Pfam" id="PF01565">
    <property type="entry name" value="FAD_binding_4"/>
    <property type="match status" value="1"/>
</dbReference>
<dbReference type="SUPFAM" id="SSF56176">
    <property type="entry name" value="FAD-binding/transporter-associated domain-like"/>
    <property type="match status" value="1"/>
</dbReference>
<dbReference type="PROSITE" id="PS51387">
    <property type="entry name" value="FAD_PCMH"/>
    <property type="match status" value="1"/>
</dbReference>
<sequence>MEKTKLTGRIVTRDDPDYNEARTNINLSLERYPDIIVFCQNKQDALNALKWARENRVPFRIRGGRHSYENFSLLNNGLVIDLSEMKKITVNQDKKLAYIEAGAELGEVYRTLWQYGLTLPAGTIANVGLTGLTLGGGIGLLTRAAGLTCDSLVQLEMIVADEKEGADLITVSCSNHPDLFWASQGGGGGNFGIVTSMTFKAVPISQVSIFSITWGWDDFEEVYNTWQNWAPYTDDRLTSSIEFWPKEVNRIEALGQFVGPKTELKKLLKPLLKAGSPTSGMVKTTPFIEAVTFFNSPGGNQPQKMKRSGSFIEKPLSERAISTIKHFLEHAPNQNASVWQQALGGAAGRVAPDQTAFYYRDAIIAQEYLTNWTSPGEKRQNVRWIEGLRTSLSKETMGDYVNWPDIEIRNWPRTYYGENVERLRRVKTTYDPENVFRFEQSIPPLRRSLFF</sequence>
<accession>Q796Y5</accession>
<accession>P71091</accession>
<organism>
    <name type="scientific">Bacillus subtilis (strain 168)</name>
    <dbReference type="NCBI Taxonomy" id="224308"/>
    <lineage>
        <taxon>Bacteria</taxon>
        <taxon>Bacillati</taxon>
        <taxon>Bacillota</taxon>
        <taxon>Bacilli</taxon>
        <taxon>Bacillales</taxon>
        <taxon>Bacillaceae</taxon>
        <taxon>Bacillus</taxon>
    </lineage>
</organism>
<protein>
    <recommendedName>
        <fullName>Uncharacterized FAD-linked oxidoreductase YgaK</fullName>
        <ecNumber>1.-.-.-</ecNumber>
    </recommendedName>
</protein>
<keyword id="KW-0274">FAD</keyword>
<keyword id="KW-0285">Flavoprotein</keyword>
<keyword id="KW-0560">Oxidoreductase</keyword>
<keyword id="KW-1185">Reference proteome</keyword>
<comment type="cofactor">
    <cofactor evidence="1">
        <name>FAD</name>
        <dbReference type="ChEBI" id="CHEBI:57692"/>
    </cofactor>
</comment>
<comment type="similarity">
    <text evidence="4">Belongs to the oxygen-dependent FAD-linked oxidoreductase family.</text>
</comment>
<comment type="sequence caution" evidence="4">
    <conflict type="erroneous initiation">
        <sequence resource="EMBL-CDS" id="CAB04812"/>
    </conflict>
</comment>
<name>YGAK_BACSU</name>
<evidence type="ECO:0000250" key="1"/>
<evidence type="ECO:0000255" key="2"/>
<evidence type="ECO:0000255" key="3">
    <source>
        <dbReference type="PROSITE-ProRule" id="PRU00718"/>
    </source>
</evidence>
<evidence type="ECO:0000305" key="4"/>
<gene>
    <name type="primary">ygaK</name>
    <name type="ordered locus">BSU08800</name>
</gene>
<feature type="chain" id="PRO_0000360419" description="Uncharacterized FAD-linked oxidoreductase YgaK">
    <location>
        <begin position="1"/>
        <end position="451"/>
    </location>
</feature>
<feature type="domain" description="FAD-binding PCMH-type" evidence="3">
    <location>
        <begin position="29"/>
        <end position="204"/>
    </location>
</feature>
<feature type="modified residue" description="Pros-8alpha-FAD histidine" evidence="2">
    <location>
        <position position="66"/>
    </location>
</feature>
<feature type="sequence conflict" description="In Ref. 1; CAB04812." evidence="4" ref="1">
    <original>A</original>
    <variation>P</variation>
    <location>
        <position position="230"/>
    </location>
</feature>